<protein>
    <recommendedName>
        <fullName evidence="1">Large ribosomal subunit protein bL19</fullName>
    </recommendedName>
    <alternativeName>
        <fullName evidence="2">50S ribosomal protein L19</fullName>
    </alternativeName>
</protein>
<organism>
    <name type="scientific">Shewanella sediminis (strain HAW-EB3)</name>
    <dbReference type="NCBI Taxonomy" id="425104"/>
    <lineage>
        <taxon>Bacteria</taxon>
        <taxon>Pseudomonadati</taxon>
        <taxon>Pseudomonadota</taxon>
        <taxon>Gammaproteobacteria</taxon>
        <taxon>Alteromonadales</taxon>
        <taxon>Shewanellaceae</taxon>
        <taxon>Shewanella</taxon>
    </lineage>
</organism>
<keyword id="KW-1185">Reference proteome</keyword>
<keyword id="KW-0687">Ribonucleoprotein</keyword>
<keyword id="KW-0689">Ribosomal protein</keyword>
<proteinExistence type="inferred from homology"/>
<reference key="1">
    <citation type="submission" date="2007-08" db="EMBL/GenBank/DDBJ databases">
        <title>Complete sequence of Shewanella sediminis HAW-EB3.</title>
        <authorList>
            <consortium name="US DOE Joint Genome Institute"/>
            <person name="Copeland A."/>
            <person name="Lucas S."/>
            <person name="Lapidus A."/>
            <person name="Barry K."/>
            <person name="Glavina del Rio T."/>
            <person name="Dalin E."/>
            <person name="Tice H."/>
            <person name="Pitluck S."/>
            <person name="Chertkov O."/>
            <person name="Brettin T."/>
            <person name="Bruce D."/>
            <person name="Detter J.C."/>
            <person name="Han C."/>
            <person name="Schmutz J."/>
            <person name="Larimer F."/>
            <person name="Land M."/>
            <person name="Hauser L."/>
            <person name="Kyrpides N."/>
            <person name="Kim E."/>
            <person name="Zhao J.-S."/>
            <person name="Richardson P."/>
        </authorList>
    </citation>
    <scope>NUCLEOTIDE SEQUENCE [LARGE SCALE GENOMIC DNA]</scope>
    <source>
        <strain>HAW-EB3</strain>
    </source>
</reference>
<feature type="chain" id="PRO_1000080374" description="Large ribosomal subunit protein bL19">
    <location>
        <begin position="1"/>
        <end position="117"/>
    </location>
</feature>
<gene>
    <name evidence="1" type="primary">rplS</name>
    <name type="ordered locus">Ssed_1162</name>
</gene>
<accession>A8FSF0</accession>
<name>RL19_SHESH</name>
<comment type="function">
    <text evidence="1">This protein is located at the 30S-50S ribosomal subunit interface and may play a role in the structure and function of the aminoacyl-tRNA binding site.</text>
</comment>
<comment type="similarity">
    <text evidence="1">Belongs to the bacterial ribosomal protein bL19 family.</text>
</comment>
<dbReference type="EMBL" id="CP000821">
    <property type="protein sequence ID" value="ABV35773.1"/>
    <property type="molecule type" value="Genomic_DNA"/>
</dbReference>
<dbReference type="RefSeq" id="WP_012141509.1">
    <property type="nucleotide sequence ID" value="NC_009831.1"/>
</dbReference>
<dbReference type="SMR" id="A8FSF0"/>
<dbReference type="STRING" id="425104.Ssed_1162"/>
<dbReference type="KEGG" id="sse:Ssed_1162"/>
<dbReference type="eggNOG" id="COG0335">
    <property type="taxonomic scope" value="Bacteria"/>
</dbReference>
<dbReference type="HOGENOM" id="CLU_103507_2_1_6"/>
<dbReference type="OrthoDB" id="9803541at2"/>
<dbReference type="Proteomes" id="UP000002015">
    <property type="component" value="Chromosome"/>
</dbReference>
<dbReference type="GO" id="GO:0022625">
    <property type="term" value="C:cytosolic large ribosomal subunit"/>
    <property type="evidence" value="ECO:0007669"/>
    <property type="project" value="TreeGrafter"/>
</dbReference>
<dbReference type="GO" id="GO:0003735">
    <property type="term" value="F:structural constituent of ribosome"/>
    <property type="evidence" value="ECO:0007669"/>
    <property type="project" value="InterPro"/>
</dbReference>
<dbReference type="GO" id="GO:0006412">
    <property type="term" value="P:translation"/>
    <property type="evidence" value="ECO:0007669"/>
    <property type="project" value="UniProtKB-UniRule"/>
</dbReference>
<dbReference type="FunFam" id="2.30.30.790:FF:000001">
    <property type="entry name" value="50S ribosomal protein L19"/>
    <property type="match status" value="1"/>
</dbReference>
<dbReference type="Gene3D" id="2.30.30.790">
    <property type="match status" value="1"/>
</dbReference>
<dbReference type="HAMAP" id="MF_00402">
    <property type="entry name" value="Ribosomal_bL19"/>
    <property type="match status" value="1"/>
</dbReference>
<dbReference type="InterPro" id="IPR001857">
    <property type="entry name" value="Ribosomal_bL19"/>
</dbReference>
<dbReference type="InterPro" id="IPR018257">
    <property type="entry name" value="Ribosomal_bL19_CS"/>
</dbReference>
<dbReference type="InterPro" id="IPR038657">
    <property type="entry name" value="Ribosomal_bL19_sf"/>
</dbReference>
<dbReference type="InterPro" id="IPR008991">
    <property type="entry name" value="Translation_prot_SH3-like_sf"/>
</dbReference>
<dbReference type="NCBIfam" id="TIGR01024">
    <property type="entry name" value="rplS_bact"/>
    <property type="match status" value="1"/>
</dbReference>
<dbReference type="PANTHER" id="PTHR15680:SF9">
    <property type="entry name" value="LARGE RIBOSOMAL SUBUNIT PROTEIN BL19M"/>
    <property type="match status" value="1"/>
</dbReference>
<dbReference type="PANTHER" id="PTHR15680">
    <property type="entry name" value="RIBOSOMAL PROTEIN L19"/>
    <property type="match status" value="1"/>
</dbReference>
<dbReference type="Pfam" id="PF01245">
    <property type="entry name" value="Ribosomal_L19"/>
    <property type="match status" value="1"/>
</dbReference>
<dbReference type="PIRSF" id="PIRSF002191">
    <property type="entry name" value="Ribosomal_L19"/>
    <property type="match status" value="1"/>
</dbReference>
<dbReference type="PRINTS" id="PR00061">
    <property type="entry name" value="RIBOSOMALL19"/>
</dbReference>
<dbReference type="SUPFAM" id="SSF50104">
    <property type="entry name" value="Translation proteins SH3-like domain"/>
    <property type="match status" value="1"/>
</dbReference>
<dbReference type="PROSITE" id="PS01015">
    <property type="entry name" value="RIBOSOMAL_L19"/>
    <property type="match status" value="1"/>
</dbReference>
<sequence>MNNIIKMLNEEQMKQDVPEFGAGDTVVVKVRVVEGGKERLQAFEGVVIAKRNRGVHSAFTVRKISNGEGVERAFQIHSPIISSIEVKRRGRVRRAKLYYLRERSGKSARIREKLATK</sequence>
<evidence type="ECO:0000255" key="1">
    <source>
        <dbReference type="HAMAP-Rule" id="MF_00402"/>
    </source>
</evidence>
<evidence type="ECO:0000305" key="2"/>